<protein>
    <recommendedName>
        <fullName evidence="10">Zinc finger and BTB domain-containing protein 16-A</fullName>
    </recommendedName>
    <alternativeName>
        <fullName>Promyelocytic leukemia zinc finger protein-A</fullName>
    </alternativeName>
    <alternativeName>
        <fullName evidence="8">Zinc finger protein PLZF-A</fullName>
    </alternativeName>
</protein>
<keyword id="KW-0963">Cytoplasm</keyword>
<keyword id="KW-0238">DNA-binding</keyword>
<keyword id="KW-0479">Metal-binding</keyword>
<keyword id="KW-0539">Nucleus</keyword>
<keyword id="KW-0597">Phosphoprotein</keyword>
<keyword id="KW-1185">Reference proteome</keyword>
<keyword id="KW-0677">Repeat</keyword>
<keyword id="KW-0804">Transcription</keyword>
<keyword id="KW-0805">Transcription regulation</keyword>
<keyword id="KW-0832">Ubl conjugation</keyword>
<keyword id="KW-0833">Ubl conjugation pathway</keyword>
<keyword id="KW-0862">Zinc</keyword>
<keyword id="KW-0863">Zinc-finger</keyword>
<proteinExistence type="evidence at protein level"/>
<feature type="chain" id="PRO_0000401140" description="Zinc finger and BTB domain-containing protein 16-A">
    <location>
        <begin position="1"/>
        <end position="671"/>
    </location>
</feature>
<feature type="domain" description="BTB" evidence="3">
    <location>
        <begin position="34"/>
        <end position="96"/>
    </location>
</feature>
<feature type="zinc finger region" description="C2H2-type 1" evidence="4">
    <location>
        <begin position="401"/>
        <end position="423"/>
    </location>
</feature>
<feature type="zinc finger region" description="C2H2-type 2" evidence="4">
    <location>
        <begin position="429"/>
        <end position="451"/>
    </location>
</feature>
<feature type="zinc finger region" description="C2H2-type 3" evidence="4">
    <location>
        <begin position="458"/>
        <end position="480"/>
    </location>
</feature>
<feature type="zinc finger region" description="C2H2-type 4" evidence="4">
    <location>
        <begin position="487"/>
        <end position="509"/>
    </location>
</feature>
<feature type="zinc finger region" description="C2H2-type 5" evidence="4">
    <location>
        <begin position="515"/>
        <end position="537"/>
    </location>
</feature>
<feature type="zinc finger region" description="C2H2-type 6" evidence="4">
    <location>
        <begin position="544"/>
        <end position="566"/>
    </location>
</feature>
<feature type="zinc finger region" description="C2H2-type 7" evidence="4">
    <location>
        <begin position="572"/>
        <end position="594"/>
    </location>
</feature>
<feature type="zinc finger region" description="C2H2-type 8" evidence="4">
    <location>
        <begin position="600"/>
        <end position="622"/>
    </location>
</feature>
<feature type="zinc finger region" description="C2H2-type 9" evidence="4">
    <location>
        <begin position="628"/>
        <end position="650"/>
    </location>
</feature>
<feature type="region of interest" description="Disordered" evidence="5">
    <location>
        <begin position="130"/>
        <end position="167"/>
    </location>
</feature>
<feature type="region of interest" description="Disordered" evidence="5">
    <location>
        <begin position="248"/>
        <end position="289"/>
    </location>
</feature>
<feature type="compositionally biased region" description="Basic and acidic residues" evidence="5">
    <location>
        <begin position="270"/>
        <end position="279"/>
    </location>
</feature>
<feature type="modified residue" description="Phosphothreonine" evidence="6">
    <location>
        <position position="283"/>
    </location>
</feature>
<name>ZB16A_DANRE</name>
<reference evidence="10" key="1">
    <citation type="submission" date="2003-02" db="EMBL/GenBank/DDBJ databases">
        <authorList>
            <consortium name="NIH - Zebrafish Gene Collection (ZGC) project"/>
        </authorList>
    </citation>
    <scope>NUCLEOTIDE SEQUENCE [LARGE SCALE MRNA]</scope>
    <source>
        <strain evidence="10">AB</strain>
    </source>
</reference>
<reference evidence="9" key="2">
    <citation type="journal article" date="2008" name="J. Proteome Res.">
        <title>Online automated in vivo zebrafish phosphoproteomics: from large-scale analysis down to a single embryo.</title>
        <authorList>
            <person name="Lemeer S."/>
            <person name="Pinkse M.W.H."/>
            <person name="Mohammed S."/>
            <person name="van Breukelen B."/>
            <person name="den Hertog J."/>
            <person name="Slijper M."/>
            <person name="Heck A.J.R."/>
        </authorList>
    </citation>
    <scope>PHOSPHORYLATION [LARGE SCALE ANALYSIS] AT THR-283</scope>
    <scope>IDENTIFICATION BY MASS SPECTROMETRY</scope>
    <source>
        <tissue evidence="6">Embryo</tissue>
    </source>
</reference>
<reference evidence="9" key="3">
    <citation type="journal article" date="2010" name="Genes Dev.">
        <title>A feedback loop mediated by degradation of an inhibitor is required to initiate neuronal differentiation.</title>
        <authorList>
            <person name="Sobieszczuk D.F."/>
            <person name="Poliakov A."/>
            <person name="Xu Q."/>
            <person name="Wilkinson D.G."/>
        </authorList>
    </citation>
    <scope>FUNCTION</scope>
    <scope>INTERACTION WITH BTBD6A</scope>
    <scope>SUBCELLULAR LOCATION</scope>
    <scope>UBIQUITINATION</scope>
    <scope>TISSUE SPECIFICITY</scope>
</reference>
<gene>
    <name evidence="11" type="primary">zbtb16a</name>
    <name evidence="8" type="synonym">plzfa</name>
    <name evidence="11" type="synonym">zbtb16</name>
    <name type="ORF">zgc:55675</name>
</gene>
<evidence type="ECO:0000250" key="1">
    <source>
        <dbReference type="UniProtKB" id="Q05516"/>
    </source>
</evidence>
<evidence type="ECO:0000255" key="2"/>
<evidence type="ECO:0000255" key="3">
    <source>
        <dbReference type="PROSITE-ProRule" id="PRU00037"/>
    </source>
</evidence>
<evidence type="ECO:0000255" key="4">
    <source>
        <dbReference type="PROSITE-ProRule" id="PRU00042"/>
    </source>
</evidence>
<evidence type="ECO:0000256" key="5">
    <source>
        <dbReference type="SAM" id="MobiDB-lite"/>
    </source>
</evidence>
<evidence type="ECO:0000269" key="6">
    <source>
    </source>
</evidence>
<evidence type="ECO:0000269" key="7">
    <source>
    </source>
</evidence>
<evidence type="ECO:0000303" key="8">
    <source>
    </source>
</evidence>
<evidence type="ECO:0000305" key="9"/>
<evidence type="ECO:0000312" key="10">
    <source>
        <dbReference type="EMBL" id="AAH46887.1"/>
    </source>
</evidence>
<evidence type="ECO:0000312" key="11">
    <source>
        <dbReference type="ZFIN" id="ZDB-GENE-030131-1989"/>
    </source>
</evidence>
<organism>
    <name type="scientific">Danio rerio</name>
    <name type="common">Zebrafish</name>
    <name type="synonym">Brachydanio rerio</name>
    <dbReference type="NCBI Taxonomy" id="7955"/>
    <lineage>
        <taxon>Eukaryota</taxon>
        <taxon>Metazoa</taxon>
        <taxon>Chordata</taxon>
        <taxon>Craniata</taxon>
        <taxon>Vertebrata</taxon>
        <taxon>Euteleostomi</taxon>
        <taxon>Actinopterygii</taxon>
        <taxon>Neopterygii</taxon>
        <taxon>Teleostei</taxon>
        <taxon>Ostariophysi</taxon>
        <taxon>Cypriniformes</taxon>
        <taxon>Danionidae</taxon>
        <taxon>Danioninae</taxon>
        <taxon>Danio</taxon>
    </lineage>
</organism>
<dbReference type="EMBL" id="BC046887">
    <property type="protein sequence ID" value="AAH46887.1"/>
    <property type="molecule type" value="mRNA"/>
</dbReference>
<dbReference type="RefSeq" id="NP_955929.1">
    <property type="nucleotide sequence ID" value="NM_199635.1"/>
</dbReference>
<dbReference type="SMR" id="Q802Y8"/>
<dbReference type="BioGRID" id="81611">
    <property type="interactions" value="2"/>
</dbReference>
<dbReference type="FunCoup" id="Q802Y8">
    <property type="interactions" value="1121"/>
</dbReference>
<dbReference type="STRING" id="7955.ENSDARP00000153802"/>
<dbReference type="iPTMnet" id="Q802Y8"/>
<dbReference type="PaxDb" id="7955-ENSDARP00000115504"/>
<dbReference type="GeneID" id="323269"/>
<dbReference type="KEGG" id="dre:323269"/>
<dbReference type="AGR" id="ZFIN:ZDB-GENE-030131-1989"/>
<dbReference type="CTD" id="323269"/>
<dbReference type="ZFIN" id="ZDB-GENE-030131-1989">
    <property type="gene designation" value="zbtb16a"/>
</dbReference>
<dbReference type="eggNOG" id="KOG1721">
    <property type="taxonomic scope" value="Eukaryota"/>
</dbReference>
<dbReference type="InParanoid" id="Q802Y8"/>
<dbReference type="OrthoDB" id="8922241at2759"/>
<dbReference type="PhylomeDB" id="Q802Y8"/>
<dbReference type="UniPathway" id="UPA00143"/>
<dbReference type="PRO" id="PR:Q802Y8"/>
<dbReference type="Proteomes" id="UP000000437">
    <property type="component" value="Chromosome 21"/>
</dbReference>
<dbReference type="GO" id="GO:0005737">
    <property type="term" value="C:cytoplasm"/>
    <property type="evidence" value="ECO:0007669"/>
    <property type="project" value="UniProtKB-SubCell"/>
</dbReference>
<dbReference type="GO" id="GO:0005654">
    <property type="term" value="C:nucleoplasm"/>
    <property type="evidence" value="ECO:0000318"/>
    <property type="project" value="GO_Central"/>
</dbReference>
<dbReference type="GO" id="GO:0005634">
    <property type="term" value="C:nucleus"/>
    <property type="evidence" value="ECO:0000314"/>
    <property type="project" value="ZFIN"/>
</dbReference>
<dbReference type="GO" id="GO:0001227">
    <property type="term" value="F:DNA-binding transcription repressor activity, RNA polymerase II-specific"/>
    <property type="evidence" value="ECO:0000318"/>
    <property type="project" value="GO_Central"/>
</dbReference>
<dbReference type="GO" id="GO:0000978">
    <property type="term" value="F:RNA polymerase II cis-regulatory region sequence-specific DNA binding"/>
    <property type="evidence" value="ECO:0000318"/>
    <property type="project" value="GO_Central"/>
</dbReference>
<dbReference type="GO" id="GO:0008270">
    <property type="term" value="F:zinc ion binding"/>
    <property type="evidence" value="ECO:0007669"/>
    <property type="project" value="UniProtKB-KW"/>
</dbReference>
<dbReference type="GO" id="GO:0000122">
    <property type="term" value="P:negative regulation of transcription by RNA polymerase II"/>
    <property type="evidence" value="ECO:0000318"/>
    <property type="project" value="GO_Central"/>
</dbReference>
<dbReference type="GO" id="GO:0032481">
    <property type="term" value="P:positive regulation of type I interferon production"/>
    <property type="evidence" value="ECO:0000314"/>
    <property type="project" value="ZFIN"/>
</dbReference>
<dbReference type="GO" id="GO:0016567">
    <property type="term" value="P:protein ubiquitination"/>
    <property type="evidence" value="ECO:0007669"/>
    <property type="project" value="UniProtKB-UniPathway"/>
</dbReference>
<dbReference type="GO" id="GO:0001817">
    <property type="term" value="P:regulation of cytokine production"/>
    <property type="evidence" value="ECO:0000318"/>
    <property type="project" value="GO_Central"/>
</dbReference>
<dbReference type="GO" id="GO:0002682">
    <property type="term" value="P:regulation of immune system process"/>
    <property type="evidence" value="ECO:0000318"/>
    <property type="project" value="GO_Central"/>
</dbReference>
<dbReference type="GO" id="GO:0050767">
    <property type="term" value="P:regulation of neurogenesis"/>
    <property type="evidence" value="ECO:0000316"/>
    <property type="project" value="ZFIN"/>
</dbReference>
<dbReference type="CDD" id="cd18205">
    <property type="entry name" value="BTB_POZ_ZBTB16_PLZF"/>
    <property type="match status" value="1"/>
</dbReference>
<dbReference type="FunFam" id="3.30.160.60:FF:000553">
    <property type="entry name" value="Zinc finger and BTB domain-containing protein 16"/>
    <property type="match status" value="1"/>
</dbReference>
<dbReference type="FunFam" id="3.30.160.60:FF:000792">
    <property type="entry name" value="Zinc finger and BTB domain-containing protein 16"/>
    <property type="match status" value="1"/>
</dbReference>
<dbReference type="FunFam" id="3.30.160.60:FF:002171">
    <property type="entry name" value="Zinc finger and BTB domain-containing protein 16"/>
    <property type="match status" value="1"/>
</dbReference>
<dbReference type="FunFam" id="3.30.710.10:FF:000059">
    <property type="entry name" value="Zinc finger and BTB domain-containing protein 16"/>
    <property type="match status" value="1"/>
</dbReference>
<dbReference type="FunFam" id="3.30.160.60:FF:000446">
    <property type="entry name" value="Zinc finger protein"/>
    <property type="match status" value="1"/>
</dbReference>
<dbReference type="Gene3D" id="3.30.160.60">
    <property type="entry name" value="Classic Zinc Finger"/>
    <property type="match status" value="6"/>
</dbReference>
<dbReference type="Gene3D" id="3.30.710.10">
    <property type="entry name" value="Potassium Channel Kv1.1, Chain A"/>
    <property type="match status" value="1"/>
</dbReference>
<dbReference type="InterPro" id="IPR000210">
    <property type="entry name" value="BTB/POZ_dom"/>
</dbReference>
<dbReference type="InterPro" id="IPR011333">
    <property type="entry name" value="SKP1/BTB/POZ_sf"/>
</dbReference>
<dbReference type="InterPro" id="IPR036236">
    <property type="entry name" value="Znf_C2H2_sf"/>
</dbReference>
<dbReference type="InterPro" id="IPR013087">
    <property type="entry name" value="Znf_C2H2_type"/>
</dbReference>
<dbReference type="PANTHER" id="PTHR24394">
    <property type="entry name" value="ZINC FINGER PROTEIN"/>
    <property type="match status" value="1"/>
</dbReference>
<dbReference type="PANTHER" id="PTHR24394:SF48">
    <property type="entry name" value="ZINC FINGER PROTEIN 771"/>
    <property type="match status" value="1"/>
</dbReference>
<dbReference type="Pfam" id="PF00651">
    <property type="entry name" value="BTB"/>
    <property type="match status" value="1"/>
</dbReference>
<dbReference type="Pfam" id="PF00096">
    <property type="entry name" value="zf-C2H2"/>
    <property type="match status" value="3"/>
</dbReference>
<dbReference type="Pfam" id="PF13912">
    <property type="entry name" value="zf-C2H2_6"/>
    <property type="match status" value="2"/>
</dbReference>
<dbReference type="Pfam" id="PF12874">
    <property type="entry name" value="zf-met"/>
    <property type="match status" value="1"/>
</dbReference>
<dbReference type="SMART" id="SM00225">
    <property type="entry name" value="BTB"/>
    <property type="match status" value="1"/>
</dbReference>
<dbReference type="SMART" id="SM00355">
    <property type="entry name" value="ZnF_C2H2"/>
    <property type="match status" value="9"/>
</dbReference>
<dbReference type="SUPFAM" id="SSF57667">
    <property type="entry name" value="beta-beta-alpha zinc fingers"/>
    <property type="match status" value="4"/>
</dbReference>
<dbReference type="SUPFAM" id="SSF54695">
    <property type="entry name" value="POZ domain"/>
    <property type="match status" value="1"/>
</dbReference>
<dbReference type="PROSITE" id="PS50097">
    <property type="entry name" value="BTB"/>
    <property type="match status" value="1"/>
</dbReference>
<dbReference type="PROSITE" id="PS00028">
    <property type="entry name" value="ZINC_FINGER_C2H2_1"/>
    <property type="match status" value="8"/>
</dbReference>
<dbReference type="PROSITE" id="PS50157">
    <property type="entry name" value="ZINC_FINGER_C2H2_2"/>
    <property type="match status" value="8"/>
</dbReference>
<sequence>MDLTKMGMIQLQNPNHPNALLHKANQMRLAGTLCDVVIMVDSQEFHAHRTVLACTSKMFEILFHRNSQHYTLDFLSPKTFQQILEYAYTATLQAKVEDLDDLLYAAEILEIEYLEEQCLKILETIQSSDENDTEVNMNDGGTEDDEERKGRHGRNLVGSKKHSTEESGYVSAAQQALALPGMVDQSPSVSTSFGLSTMSPTKAAVDSLMSIGQSLLQSTMHPGVGAEQPLHGNSHPMMGEIKTEMMQVDESGEHESPKAMESIASSNGERSGEPDKNRDGPGTPTRSSVITSARELHYVRDEGLGDQQAEVSQMGLEAMAGMTEKHLASLYGIPSNHKNEAMLSMPASMASSLHMSPALAMSMDFSAYGGLLPQSFIQREFFSKLGELAAGIKPDGRSLNERCNVCGAELPDNEAIEQHRKLHSGMKTYGCELCGKRFLDSLRLRMHLLSHSAGEKAIVCDQCGAQFQKEDALEAHRQIHTGSDMAIFCLLCGKRFQTQTALQQHMEVHAGVRSYICSECNRTFPSHTALKRHLRSHTAGDHPFECEFCGSCFRDESTLKGHKRIHTGEKPYECNGCGKKFSLKHQLETHYRVHTGEKPFECKLCHQRSRDYSAMIKHLRTHNGASPYQCTICLEYCPSLSAMQKHMKGHKPEDIPPDWRIEKTYLYLCYV</sequence>
<comment type="function">
    <text evidence="1 7">Probable transcription factor. Probable substrate-recognition component of an E3 ubiquitin-protein ligase complex which mediates the ubiquitination and subsequent proteasomal degradation of target proteins (By similarity). Inhibits neurogenesis.</text>
</comment>
<comment type="pathway">
    <text evidence="1">Protein modification; protein ubiquitination.</text>
</comment>
<comment type="subunit">
    <text evidence="7">Interacts with btbd6a (via BTB domain).</text>
</comment>
<comment type="subcellular location">
    <subcellularLocation>
        <location evidence="7">Nucleus</location>
    </subcellularLocation>
    <subcellularLocation>
        <location evidence="7">Cytoplasm</location>
    </subcellularLocation>
    <text evidence="7">Nuclear export to the cytoplasm is promoted by btbd6a.</text>
</comment>
<comment type="tissue specificity">
    <text evidence="7">During early stages of primary neurogenesis, expressed in the neural epithelium, with highest levels in the forebrain and midbrain. Also expressed in a posterior-to-anterior gradient in the caudal neural plate at the 3-6 somite stage.</text>
</comment>
<comment type="PTM">
    <text evidence="7">Polyubiquitinated, leading to its proteasomal degradation.</text>
</comment>
<comment type="similarity">
    <text evidence="2">Belongs to the krueppel C2H2-type zinc-finger protein family.</text>
</comment>
<accession>Q802Y8</accession>